<comment type="function">
    <text evidence="1">Participates actively in the response to hyperosmotic and heat shock by preventing the aggregation of stress-denatured proteins and by disaggregating proteins, also in an autonomous, DnaK-independent fashion. Unfolded proteins bind initially to DnaJ; upon interaction with the DnaJ-bound protein, DnaK hydrolyzes its bound ATP, resulting in the formation of a stable complex. GrpE releases ADP from DnaK; ATP binding to DnaK triggers the release of the substrate protein, thus completing the reaction cycle. Several rounds of ATP-dependent interactions between DnaJ, DnaK and GrpE are required for fully efficient folding. Also involved, together with DnaK and GrpE, in the DNA replication of plasmids through activation of initiation proteins.</text>
</comment>
<comment type="cofactor">
    <cofactor evidence="1">
        <name>Zn(2+)</name>
        <dbReference type="ChEBI" id="CHEBI:29105"/>
    </cofactor>
    <text evidence="1">Binds 2 Zn(2+) ions per monomer.</text>
</comment>
<comment type="subunit">
    <text evidence="1">Homodimer.</text>
</comment>
<comment type="subcellular location">
    <subcellularLocation>
        <location evidence="1">Cytoplasm</location>
    </subcellularLocation>
</comment>
<comment type="domain">
    <text evidence="1">The J domain is necessary and sufficient to stimulate DnaK ATPase activity. Zinc center 1 plays an important role in the autonomous, DnaK-independent chaperone activity of DnaJ. Zinc center 2 is essential for interaction with DnaK and for DnaJ activity.</text>
</comment>
<comment type="similarity">
    <text evidence="1">Belongs to the DnaJ family.</text>
</comment>
<name>DNAJ_CLOPE</name>
<gene>
    <name evidence="1" type="primary">dnaJ</name>
    <name type="ordered locus">CPE2032</name>
</gene>
<proteinExistence type="inferred from homology"/>
<sequence length="387" mass="41877">MAKRDYYEVLGLQKGASDDEIKRAFRKMAMKYHPDRNPGDKEAEENFKEVNEAYDVLKDPDKKAKYDQFGHAAFDGSGGFGGGGFGGFDAGGFDFSEMGGFGDIFESFFGGGFGGGSSRRRNAPQRGADLEYRLNITFEEAVFGCEKEISITRTENCETCHGTGAKAGTSPKTCPKCNGSGQIRVQRQTPLGSFVSTTTCDQCGGTGKVIEDPCPDCKGKGTVRKNRKITVKIPAGVDTGNIIPLRGQGEQGANNGPAGDLYIRVNVAPSKIFRREGSDIYYDYKISMAKAALGAEITVPTVDGNVKYKVPAGTQPGTKFRLKGKGVPHVNGGGRGNQYVHMVVEVPKHLNKEQEEALKAFMKASGESVDDIDEKDEGFFSKFKKKK</sequence>
<evidence type="ECO:0000255" key="1">
    <source>
        <dbReference type="HAMAP-Rule" id="MF_01152"/>
    </source>
</evidence>
<organism>
    <name type="scientific">Clostridium perfringens (strain 13 / Type A)</name>
    <dbReference type="NCBI Taxonomy" id="195102"/>
    <lineage>
        <taxon>Bacteria</taxon>
        <taxon>Bacillati</taxon>
        <taxon>Bacillota</taxon>
        <taxon>Clostridia</taxon>
        <taxon>Eubacteriales</taxon>
        <taxon>Clostridiaceae</taxon>
        <taxon>Clostridium</taxon>
    </lineage>
</organism>
<dbReference type="EMBL" id="BA000016">
    <property type="protein sequence ID" value="BAB81738.1"/>
    <property type="molecule type" value="Genomic_DNA"/>
</dbReference>
<dbReference type="RefSeq" id="WP_003451159.1">
    <property type="nucleotide sequence ID" value="NC_003366.1"/>
</dbReference>
<dbReference type="SMR" id="Q8XIT1"/>
<dbReference type="STRING" id="195102.gene:10491302"/>
<dbReference type="KEGG" id="cpe:CPE2032"/>
<dbReference type="HOGENOM" id="CLU_017633_0_7_9"/>
<dbReference type="Proteomes" id="UP000000818">
    <property type="component" value="Chromosome"/>
</dbReference>
<dbReference type="GO" id="GO:0005737">
    <property type="term" value="C:cytoplasm"/>
    <property type="evidence" value="ECO:0007669"/>
    <property type="project" value="UniProtKB-SubCell"/>
</dbReference>
<dbReference type="GO" id="GO:0005524">
    <property type="term" value="F:ATP binding"/>
    <property type="evidence" value="ECO:0007669"/>
    <property type="project" value="InterPro"/>
</dbReference>
<dbReference type="GO" id="GO:0031072">
    <property type="term" value="F:heat shock protein binding"/>
    <property type="evidence" value="ECO:0007669"/>
    <property type="project" value="InterPro"/>
</dbReference>
<dbReference type="GO" id="GO:0051082">
    <property type="term" value="F:unfolded protein binding"/>
    <property type="evidence" value="ECO:0007669"/>
    <property type="project" value="UniProtKB-UniRule"/>
</dbReference>
<dbReference type="GO" id="GO:0008270">
    <property type="term" value="F:zinc ion binding"/>
    <property type="evidence" value="ECO:0007669"/>
    <property type="project" value="UniProtKB-UniRule"/>
</dbReference>
<dbReference type="GO" id="GO:0051085">
    <property type="term" value="P:chaperone cofactor-dependent protein refolding"/>
    <property type="evidence" value="ECO:0007669"/>
    <property type="project" value="TreeGrafter"/>
</dbReference>
<dbReference type="GO" id="GO:0006260">
    <property type="term" value="P:DNA replication"/>
    <property type="evidence" value="ECO:0007669"/>
    <property type="project" value="UniProtKB-KW"/>
</dbReference>
<dbReference type="GO" id="GO:0042026">
    <property type="term" value="P:protein refolding"/>
    <property type="evidence" value="ECO:0007669"/>
    <property type="project" value="TreeGrafter"/>
</dbReference>
<dbReference type="GO" id="GO:0009408">
    <property type="term" value="P:response to heat"/>
    <property type="evidence" value="ECO:0007669"/>
    <property type="project" value="InterPro"/>
</dbReference>
<dbReference type="CDD" id="cd06257">
    <property type="entry name" value="DnaJ"/>
    <property type="match status" value="1"/>
</dbReference>
<dbReference type="CDD" id="cd10747">
    <property type="entry name" value="DnaJ_C"/>
    <property type="match status" value="1"/>
</dbReference>
<dbReference type="CDD" id="cd10719">
    <property type="entry name" value="DnaJ_zf"/>
    <property type="match status" value="1"/>
</dbReference>
<dbReference type="FunFam" id="1.10.287.110:FF:000034">
    <property type="entry name" value="Chaperone protein DnaJ"/>
    <property type="match status" value="1"/>
</dbReference>
<dbReference type="FunFam" id="2.10.230.10:FF:000002">
    <property type="entry name" value="Molecular chaperone DnaJ"/>
    <property type="match status" value="1"/>
</dbReference>
<dbReference type="FunFam" id="2.60.260.20:FF:000004">
    <property type="entry name" value="Molecular chaperone DnaJ"/>
    <property type="match status" value="1"/>
</dbReference>
<dbReference type="Gene3D" id="1.10.287.110">
    <property type="entry name" value="DnaJ domain"/>
    <property type="match status" value="1"/>
</dbReference>
<dbReference type="Gene3D" id="2.10.230.10">
    <property type="entry name" value="Heat shock protein DnaJ, cysteine-rich domain"/>
    <property type="match status" value="1"/>
</dbReference>
<dbReference type="Gene3D" id="2.60.260.20">
    <property type="entry name" value="Urease metallochaperone UreE, N-terminal domain"/>
    <property type="match status" value="2"/>
</dbReference>
<dbReference type="HAMAP" id="MF_01152">
    <property type="entry name" value="DnaJ"/>
    <property type="match status" value="1"/>
</dbReference>
<dbReference type="InterPro" id="IPR012724">
    <property type="entry name" value="DnaJ"/>
</dbReference>
<dbReference type="InterPro" id="IPR002939">
    <property type="entry name" value="DnaJ_C"/>
</dbReference>
<dbReference type="InterPro" id="IPR001623">
    <property type="entry name" value="DnaJ_domain"/>
</dbReference>
<dbReference type="InterPro" id="IPR018253">
    <property type="entry name" value="DnaJ_domain_CS"/>
</dbReference>
<dbReference type="InterPro" id="IPR008971">
    <property type="entry name" value="HSP40/DnaJ_pept-bd"/>
</dbReference>
<dbReference type="InterPro" id="IPR001305">
    <property type="entry name" value="HSP_DnaJ_Cys-rich_dom"/>
</dbReference>
<dbReference type="InterPro" id="IPR036410">
    <property type="entry name" value="HSP_DnaJ_Cys-rich_dom_sf"/>
</dbReference>
<dbReference type="InterPro" id="IPR036869">
    <property type="entry name" value="J_dom_sf"/>
</dbReference>
<dbReference type="NCBIfam" id="TIGR02349">
    <property type="entry name" value="DnaJ_bact"/>
    <property type="match status" value="1"/>
</dbReference>
<dbReference type="NCBIfam" id="NF008035">
    <property type="entry name" value="PRK10767.1"/>
    <property type="match status" value="1"/>
</dbReference>
<dbReference type="NCBIfam" id="NF010890">
    <property type="entry name" value="PRK14297.1"/>
    <property type="match status" value="1"/>
</dbReference>
<dbReference type="PANTHER" id="PTHR43096:SF48">
    <property type="entry name" value="CHAPERONE PROTEIN DNAJ"/>
    <property type="match status" value="1"/>
</dbReference>
<dbReference type="PANTHER" id="PTHR43096">
    <property type="entry name" value="DNAJ HOMOLOG 1, MITOCHONDRIAL-RELATED"/>
    <property type="match status" value="1"/>
</dbReference>
<dbReference type="Pfam" id="PF00226">
    <property type="entry name" value="DnaJ"/>
    <property type="match status" value="1"/>
</dbReference>
<dbReference type="Pfam" id="PF01556">
    <property type="entry name" value="DnaJ_C"/>
    <property type="match status" value="1"/>
</dbReference>
<dbReference type="Pfam" id="PF00684">
    <property type="entry name" value="DnaJ_CXXCXGXG"/>
    <property type="match status" value="1"/>
</dbReference>
<dbReference type="PRINTS" id="PR00625">
    <property type="entry name" value="JDOMAIN"/>
</dbReference>
<dbReference type="SMART" id="SM00271">
    <property type="entry name" value="DnaJ"/>
    <property type="match status" value="1"/>
</dbReference>
<dbReference type="SUPFAM" id="SSF46565">
    <property type="entry name" value="Chaperone J-domain"/>
    <property type="match status" value="1"/>
</dbReference>
<dbReference type="SUPFAM" id="SSF57938">
    <property type="entry name" value="DnaJ/Hsp40 cysteine-rich domain"/>
    <property type="match status" value="1"/>
</dbReference>
<dbReference type="SUPFAM" id="SSF49493">
    <property type="entry name" value="HSP40/DnaJ peptide-binding domain"/>
    <property type="match status" value="2"/>
</dbReference>
<dbReference type="PROSITE" id="PS00636">
    <property type="entry name" value="DNAJ_1"/>
    <property type="match status" value="1"/>
</dbReference>
<dbReference type="PROSITE" id="PS50076">
    <property type="entry name" value="DNAJ_2"/>
    <property type="match status" value="1"/>
</dbReference>
<dbReference type="PROSITE" id="PS51188">
    <property type="entry name" value="ZF_CR"/>
    <property type="match status" value="1"/>
</dbReference>
<protein>
    <recommendedName>
        <fullName evidence="1">Chaperone protein DnaJ</fullName>
    </recommendedName>
</protein>
<accession>Q8XIT1</accession>
<feature type="chain" id="PRO_0000070763" description="Chaperone protein DnaJ">
    <location>
        <begin position="1"/>
        <end position="387"/>
    </location>
</feature>
<feature type="domain" description="J" evidence="1">
    <location>
        <begin position="5"/>
        <end position="70"/>
    </location>
</feature>
<feature type="repeat" description="CXXCXGXG motif">
    <location>
        <begin position="157"/>
        <end position="164"/>
    </location>
</feature>
<feature type="repeat" description="CXXCXGXG motif">
    <location>
        <begin position="174"/>
        <end position="181"/>
    </location>
</feature>
<feature type="repeat" description="CXXCXGXG motif">
    <location>
        <begin position="200"/>
        <end position="207"/>
    </location>
</feature>
<feature type="repeat" description="CXXCXGXG motif">
    <location>
        <begin position="214"/>
        <end position="221"/>
    </location>
</feature>
<feature type="zinc finger region" description="CR-type" evidence="1">
    <location>
        <begin position="144"/>
        <end position="226"/>
    </location>
</feature>
<feature type="binding site" evidence="1">
    <location>
        <position position="157"/>
    </location>
    <ligand>
        <name>Zn(2+)</name>
        <dbReference type="ChEBI" id="CHEBI:29105"/>
        <label>1</label>
    </ligand>
</feature>
<feature type="binding site" evidence="1">
    <location>
        <position position="160"/>
    </location>
    <ligand>
        <name>Zn(2+)</name>
        <dbReference type="ChEBI" id="CHEBI:29105"/>
        <label>1</label>
    </ligand>
</feature>
<feature type="binding site" evidence="1">
    <location>
        <position position="174"/>
    </location>
    <ligand>
        <name>Zn(2+)</name>
        <dbReference type="ChEBI" id="CHEBI:29105"/>
        <label>2</label>
    </ligand>
</feature>
<feature type="binding site" evidence="1">
    <location>
        <position position="177"/>
    </location>
    <ligand>
        <name>Zn(2+)</name>
        <dbReference type="ChEBI" id="CHEBI:29105"/>
        <label>2</label>
    </ligand>
</feature>
<feature type="binding site" evidence="1">
    <location>
        <position position="200"/>
    </location>
    <ligand>
        <name>Zn(2+)</name>
        <dbReference type="ChEBI" id="CHEBI:29105"/>
        <label>2</label>
    </ligand>
</feature>
<feature type="binding site" evidence="1">
    <location>
        <position position="203"/>
    </location>
    <ligand>
        <name>Zn(2+)</name>
        <dbReference type="ChEBI" id="CHEBI:29105"/>
        <label>2</label>
    </ligand>
</feature>
<feature type="binding site" evidence="1">
    <location>
        <position position="214"/>
    </location>
    <ligand>
        <name>Zn(2+)</name>
        <dbReference type="ChEBI" id="CHEBI:29105"/>
        <label>1</label>
    </ligand>
</feature>
<feature type="binding site" evidence="1">
    <location>
        <position position="217"/>
    </location>
    <ligand>
        <name>Zn(2+)</name>
        <dbReference type="ChEBI" id="CHEBI:29105"/>
        <label>1</label>
    </ligand>
</feature>
<keyword id="KW-0143">Chaperone</keyword>
<keyword id="KW-0963">Cytoplasm</keyword>
<keyword id="KW-0235">DNA replication</keyword>
<keyword id="KW-0479">Metal-binding</keyword>
<keyword id="KW-1185">Reference proteome</keyword>
<keyword id="KW-0677">Repeat</keyword>
<keyword id="KW-0346">Stress response</keyword>
<keyword id="KW-0862">Zinc</keyword>
<keyword id="KW-0863">Zinc-finger</keyword>
<reference key="1">
    <citation type="journal article" date="2002" name="Proc. Natl. Acad. Sci. U.S.A.">
        <title>Complete genome sequence of Clostridium perfringens, an anaerobic flesh-eater.</title>
        <authorList>
            <person name="Shimizu T."/>
            <person name="Ohtani K."/>
            <person name="Hirakawa H."/>
            <person name="Ohshima K."/>
            <person name="Yamashita A."/>
            <person name="Shiba T."/>
            <person name="Ogasawara N."/>
            <person name="Hattori M."/>
            <person name="Kuhara S."/>
            <person name="Hayashi H."/>
        </authorList>
    </citation>
    <scope>NUCLEOTIDE SEQUENCE [LARGE SCALE GENOMIC DNA]</scope>
    <source>
        <strain>13 / Type A</strain>
    </source>
</reference>